<evidence type="ECO:0000250" key="1"/>
<organism>
    <name type="scientific">Arabidopsis thaliana</name>
    <name type="common">Mouse-ear cress</name>
    <dbReference type="NCBI Taxonomy" id="3702"/>
    <lineage>
        <taxon>Eukaryota</taxon>
        <taxon>Viridiplantae</taxon>
        <taxon>Streptophyta</taxon>
        <taxon>Embryophyta</taxon>
        <taxon>Tracheophyta</taxon>
        <taxon>Spermatophyta</taxon>
        <taxon>Magnoliopsida</taxon>
        <taxon>eudicotyledons</taxon>
        <taxon>Gunneridae</taxon>
        <taxon>Pentapetalae</taxon>
        <taxon>rosids</taxon>
        <taxon>malvids</taxon>
        <taxon>Brassicales</taxon>
        <taxon>Brassicaceae</taxon>
        <taxon>Camelineae</taxon>
        <taxon>Arabidopsis</taxon>
    </lineage>
</organism>
<accession>Q9SJ07</accession>
<sequence length="278" mass="32239">MSFDVRSEKIDLIKGPELPDYNMFMSQKFTSYEGKLAILLTGNGDCSFYMWILEDAAKHEWSKKAYVVPDFFPLDPFVLLMQRANENDIVRTFHYDDRVGTSDAIVESTPASPPRHIMFSVIIRKDSPLRNLRGAKSIFKVSFTIILKTFIVKLIMMKDFQLDGDMIISKTLSRTDVDHHGRLFLPKNQVLSVLKKMRNVTKESLRKGIELEVVDIIENDSYSVILKSRNTTNDFVLASGWSIMKHSLDLQEGDDIKLFWDYLNYKFIILNFEYNLIP</sequence>
<comment type="subcellular location">
    <subcellularLocation>
        <location evidence="1">Nucleus</location>
    </subcellularLocation>
</comment>
<proteinExistence type="inferred from homology"/>
<name>Y2192_ARATH</name>
<keyword id="KW-0238">DNA-binding</keyword>
<keyword id="KW-0539">Nucleus</keyword>
<keyword id="KW-1185">Reference proteome</keyword>
<keyword id="KW-0804">Transcription</keyword>
<keyword id="KW-0805">Transcription regulation</keyword>
<protein>
    <recommendedName>
        <fullName>Putative B3 domain-containing protein At2g21920</fullName>
    </recommendedName>
</protein>
<dbReference type="EMBL" id="AC007019">
    <property type="protein sequence ID" value="AAD20409.1"/>
    <property type="molecule type" value="Genomic_DNA"/>
</dbReference>
<dbReference type="EMBL" id="CP002685">
    <property type="protein sequence ID" value="AEC07238.1"/>
    <property type="molecule type" value="Genomic_DNA"/>
</dbReference>
<dbReference type="PIR" id="G84606">
    <property type="entry name" value="G84606"/>
</dbReference>
<dbReference type="RefSeq" id="NP_179783.1">
    <property type="nucleotide sequence ID" value="NM_127761.1"/>
</dbReference>
<dbReference type="SMR" id="Q9SJ07"/>
<dbReference type="PaxDb" id="3702-AT2G21920.1"/>
<dbReference type="EnsemblPlants" id="AT2G21920.1">
    <property type="protein sequence ID" value="AT2G21920.1"/>
    <property type="gene ID" value="AT2G21920"/>
</dbReference>
<dbReference type="GeneID" id="816728"/>
<dbReference type="Gramene" id="AT2G21920.1">
    <property type="protein sequence ID" value="AT2G21920.1"/>
    <property type="gene ID" value="AT2G21920"/>
</dbReference>
<dbReference type="KEGG" id="ath:AT2G21920"/>
<dbReference type="Araport" id="AT2G21920"/>
<dbReference type="TAIR" id="AT2G21920"/>
<dbReference type="HOGENOM" id="CLU_1002370_0_0_1"/>
<dbReference type="InParanoid" id="Q9SJ07"/>
<dbReference type="PRO" id="PR:Q9SJ07"/>
<dbReference type="Proteomes" id="UP000006548">
    <property type="component" value="Chromosome 2"/>
</dbReference>
<dbReference type="ExpressionAtlas" id="Q9SJ07">
    <property type="expression patterns" value="baseline and differential"/>
</dbReference>
<dbReference type="GO" id="GO:0005634">
    <property type="term" value="C:nucleus"/>
    <property type="evidence" value="ECO:0007669"/>
    <property type="project" value="UniProtKB-SubCell"/>
</dbReference>
<dbReference type="GO" id="GO:0003677">
    <property type="term" value="F:DNA binding"/>
    <property type="evidence" value="ECO:0007669"/>
    <property type="project" value="UniProtKB-KW"/>
</dbReference>
<dbReference type="CDD" id="cd10017">
    <property type="entry name" value="B3_DNA"/>
    <property type="match status" value="1"/>
</dbReference>
<dbReference type="Gene3D" id="2.40.330.10">
    <property type="entry name" value="DNA-binding pseudobarrel domain"/>
    <property type="match status" value="1"/>
</dbReference>
<dbReference type="InterPro" id="IPR003340">
    <property type="entry name" value="B3_DNA-bd"/>
</dbReference>
<dbReference type="InterPro" id="IPR051442">
    <property type="entry name" value="B3_domain"/>
</dbReference>
<dbReference type="InterPro" id="IPR015300">
    <property type="entry name" value="DNA-bd_pseudobarrel_sf"/>
</dbReference>
<dbReference type="InterPro" id="IPR013187">
    <property type="entry name" value="F-box-assoc_dom_typ3"/>
</dbReference>
<dbReference type="PANTHER" id="PTHR34269:SF15">
    <property type="entry name" value="TF-B3 DOMAIN-CONTAINING PROTEIN"/>
    <property type="match status" value="1"/>
</dbReference>
<dbReference type="PANTHER" id="PTHR34269">
    <property type="entry name" value="TRANSCRIPTION FACTOR B3-DOMAIN FAMILY-RELATED"/>
    <property type="match status" value="1"/>
</dbReference>
<dbReference type="Pfam" id="PF08268">
    <property type="entry name" value="FBA_3"/>
    <property type="match status" value="1"/>
</dbReference>
<dbReference type="SMART" id="SM01019">
    <property type="entry name" value="B3"/>
    <property type="match status" value="1"/>
</dbReference>
<dbReference type="SUPFAM" id="SSF101936">
    <property type="entry name" value="DNA-binding pseudobarrel domain"/>
    <property type="match status" value="1"/>
</dbReference>
<feature type="chain" id="PRO_0000375130" description="Putative B3 domain-containing protein At2g21920">
    <location>
        <begin position="1"/>
        <end position="278"/>
    </location>
</feature>
<feature type="DNA-binding region" description="TF-B3">
    <location>
        <begin position="168"/>
        <end position="275"/>
    </location>
</feature>
<reference key="1">
    <citation type="journal article" date="1999" name="Nature">
        <title>Sequence and analysis of chromosome 2 of the plant Arabidopsis thaliana.</title>
        <authorList>
            <person name="Lin X."/>
            <person name="Kaul S."/>
            <person name="Rounsley S.D."/>
            <person name="Shea T.P."/>
            <person name="Benito M.-I."/>
            <person name="Town C.D."/>
            <person name="Fujii C.Y."/>
            <person name="Mason T.M."/>
            <person name="Bowman C.L."/>
            <person name="Barnstead M.E."/>
            <person name="Feldblyum T.V."/>
            <person name="Buell C.R."/>
            <person name="Ketchum K.A."/>
            <person name="Lee J.J."/>
            <person name="Ronning C.M."/>
            <person name="Koo H.L."/>
            <person name="Moffat K.S."/>
            <person name="Cronin L.A."/>
            <person name="Shen M."/>
            <person name="Pai G."/>
            <person name="Van Aken S."/>
            <person name="Umayam L."/>
            <person name="Tallon L.J."/>
            <person name="Gill J.E."/>
            <person name="Adams M.D."/>
            <person name="Carrera A.J."/>
            <person name="Creasy T.H."/>
            <person name="Goodman H.M."/>
            <person name="Somerville C.R."/>
            <person name="Copenhaver G.P."/>
            <person name="Preuss D."/>
            <person name="Nierman W.C."/>
            <person name="White O."/>
            <person name="Eisen J.A."/>
            <person name="Salzberg S.L."/>
            <person name="Fraser C.M."/>
            <person name="Venter J.C."/>
        </authorList>
    </citation>
    <scope>NUCLEOTIDE SEQUENCE [LARGE SCALE GENOMIC DNA]</scope>
    <source>
        <strain>cv. Columbia</strain>
    </source>
</reference>
<reference key="2">
    <citation type="journal article" date="2017" name="Plant J.">
        <title>Araport11: a complete reannotation of the Arabidopsis thaliana reference genome.</title>
        <authorList>
            <person name="Cheng C.Y."/>
            <person name="Krishnakumar V."/>
            <person name="Chan A.P."/>
            <person name="Thibaud-Nissen F."/>
            <person name="Schobel S."/>
            <person name="Town C.D."/>
        </authorList>
    </citation>
    <scope>GENOME REANNOTATION</scope>
    <source>
        <strain>cv. Columbia</strain>
    </source>
</reference>
<reference key="3">
    <citation type="journal article" date="2008" name="Trends Plant Sci.">
        <title>The plant B3 superfamily.</title>
        <authorList>
            <person name="Swaminathan K."/>
            <person name="Peterson K."/>
            <person name="Jack T."/>
        </authorList>
    </citation>
    <scope>GENE FAMILY</scope>
</reference>
<gene>
    <name type="ordered locus">At2g21920</name>
    <name type="ORF">F7D8.24</name>
</gene>